<gene>
    <name evidence="1" type="primary">rplE</name>
    <name type="ordered locus">CPE2393</name>
</gene>
<sequence length="179" mass="20352">MNRLQERYEKEVVPAMMEKFGYKNIMQVPKIEKVVINMGVGEAKDNPKVLESAVSDLQIIAGQKPVLTRAKKSVANFKIRENMALGCKVTLRKTNMYEFVDKLVSIALPRVRDFRGVSAKAFDGRGNYSLGIKEQLIFPEIEYDKVDKVRGMDIIFVTSANTDEEARELLRFLGMPFAQ</sequence>
<organism>
    <name type="scientific">Clostridium perfringens (strain 13 / Type A)</name>
    <dbReference type="NCBI Taxonomy" id="195102"/>
    <lineage>
        <taxon>Bacteria</taxon>
        <taxon>Bacillati</taxon>
        <taxon>Bacillota</taxon>
        <taxon>Clostridia</taxon>
        <taxon>Eubacteriales</taxon>
        <taxon>Clostridiaceae</taxon>
        <taxon>Clostridium</taxon>
    </lineage>
</organism>
<proteinExistence type="inferred from homology"/>
<dbReference type="EMBL" id="BA000016">
    <property type="protein sequence ID" value="BAB82099.1"/>
    <property type="molecule type" value="Genomic_DNA"/>
</dbReference>
<dbReference type="RefSeq" id="WP_003454431.1">
    <property type="nucleotide sequence ID" value="NC_003366.1"/>
</dbReference>
<dbReference type="SMR" id="Q8XHT5"/>
<dbReference type="STRING" id="195102.gene:10491710"/>
<dbReference type="GeneID" id="93001021"/>
<dbReference type="KEGG" id="cpe:CPE2393"/>
<dbReference type="HOGENOM" id="CLU_061015_2_1_9"/>
<dbReference type="Proteomes" id="UP000000818">
    <property type="component" value="Chromosome"/>
</dbReference>
<dbReference type="GO" id="GO:1990904">
    <property type="term" value="C:ribonucleoprotein complex"/>
    <property type="evidence" value="ECO:0007669"/>
    <property type="project" value="UniProtKB-KW"/>
</dbReference>
<dbReference type="GO" id="GO:0005840">
    <property type="term" value="C:ribosome"/>
    <property type="evidence" value="ECO:0007669"/>
    <property type="project" value="UniProtKB-KW"/>
</dbReference>
<dbReference type="GO" id="GO:0019843">
    <property type="term" value="F:rRNA binding"/>
    <property type="evidence" value="ECO:0007669"/>
    <property type="project" value="UniProtKB-UniRule"/>
</dbReference>
<dbReference type="GO" id="GO:0003735">
    <property type="term" value="F:structural constituent of ribosome"/>
    <property type="evidence" value="ECO:0007669"/>
    <property type="project" value="InterPro"/>
</dbReference>
<dbReference type="GO" id="GO:0000049">
    <property type="term" value="F:tRNA binding"/>
    <property type="evidence" value="ECO:0007669"/>
    <property type="project" value="UniProtKB-UniRule"/>
</dbReference>
<dbReference type="GO" id="GO:0006412">
    <property type="term" value="P:translation"/>
    <property type="evidence" value="ECO:0007669"/>
    <property type="project" value="UniProtKB-UniRule"/>
</dbReference>
<dbReference type="FunFam" id="3.30.1440.10:FF:000001">
    <property type="entry name" value="50S ribosomal protein L5"/>
    <property type="match status" value="1"/>
</dbReference>
<dbReference type="Gene3D" id="3.30.1440.10">
    <property type="match status" value="1"/>
</dbReference>
<dbReference type="HAMAP" id="MF_01333_B">
    <property type="entry name" value="Ribosomal_uL5_B"/>
    <property type="match status" value="1"/>
</dbReference>
<dbReference type="InterPro" id="IPR002132">
    <property type="entry name" value="Ribosomal_uL5"/>
</dbReference>
<dbReference type="InterPro" id="IPR020930">
    <property type="entry name" value="Ribosomal_uL5_bac-type"/>
</dbReference>
<dbReference type="InterPro" id="IPR031309">
    <property type="entry name" value="Ribosomal_uL5_C"/>
</dbReference>
<dbReference type="InterPro" id="IPR020929">
    <property type="entry name" value="Ribosomal_uL5_CS"/>
</dbReference>
<dbReference type="InterPro" id="IPR022803">
    <property type="entry name" value="Ribosomal_uL5_dom_sf"/>
</dbReference>
<dbReference type="InterPro" id="IPR031310">
    <property type="entry name" value="Ribosomal_uL5_N"/>
</dbReference>
<dbReference type="NCBIfam" id="NF000585">
    <property type="entry name" value="PRK00010.1"/>
    <property type="match status" value="1"/>
</dbReference>
<dbReference type="PANTHER" id="PTHR11994">
    <property type="entry name" value="60S RIBOSOMAL PROTEIN L11-RELATED"/>
    <property type="match status" value="1"/>
</dbReference>
<dbReference type="Pfam" id="PF00281">
    <property type="entry name" value="Ribosomal_L5"/>
    <property type="match status" value="1"/>
</dbReference>
<dbReference type="Pfam" id="PF00673">
    <property type="entry name" value="Ribosomal_L5_C"/>
    <property type="match status" value="1"/>
</dbReference>
<dbReference type="PIRSF" id="PIRSF002161">
    <property type="entry name" value="Ribosomal_L5"/>
    <property type="match status" value="1"/>
</dbReference>
<dbReference type="SUPFAM" id="SSF55282">
    <property type="entry name" value="RL5-like"/>
    <property type="match status" value="1"/>
</dbReference>
<dbReference type="PROSITE" id="PS00358">
    <property type="entry name" value="RIBOSOMAL_L5"/>
    <property type="match status" value="1"/>
</dbReference>
<keyword id="KW-1185">Reference proteome</keyword>
<keyword id="KW-0687">Ribonucleoprotein</keyword>
<keyword id="KW-0689">Ribosomal protein</keyword>
<keyword id="KW-0694">RNA-binding</keyword>
<keyword id="KW-0699">rRNA-binding</keyword>
<keyword id="KW-0820">tRNA-binding</keyword>
<feature type="chain" id="PRO_0000124917" description="Large ribosomal subunit protein uL5">
    <location>
        <begin position="1"/>
        <end position="179"/>
    </location>
</feature>
<evidence type="ECO:0000255" key="1">
    <source>
        <dbReference type="HAMAP-Rule" id="MF_01333"/>
    </source>
</evidence>
<evidence type="ECO:0000305" key="2"/>
<name>RL5_CLOPE</name>
<comment type="function">
    <text evidence="1">This is one of the proteins that bind and probably mediate the attachment of the 5S RNA into the large ribosomal subunit, where it forms part of the central protuberance. In the 70S ribosome it contacts protein S13 of the 30S subunit (bridge B1b), connecting the 2 subunits; this bridge is implicated in subunit movement. Contacts the P site tRNA; the 5S rRNA and some of its associated proteins might help stabilize positioning of ribosome-bound tRNAs.</text>
</comment>
<comment type="subunit">
    <text evidence="1">Part of the 50S ribosomal subunit; part of the 5S rRNA/L5/L18/L25 subcomplex. Contacts the 5S rRNA and the P site tRNA. Forms a bridge to the 30S subunit in the 70S ribosome.</text>
</comment>
<comment type="similarity">
    <text evidence="1">Belongs to the universal ribosomal protein uL5 family.</text>
</comment>
<accession>Q8XHT5</accession>
<protein>
    <recommendedName>
        <fullName evidence="1">Large ribosomal subunit protein uL5</fullName>
    </recommendedName>
    <alternativeName>
        <fullName evidence="2">50S ribosomal protein L5</fullName>
    </alternativeName>
</protein>
<reference key="1">
    <citation type="journal article" date="2002" name="Proc. Natl. Acad. Sci. U.S.A.">
        <title>Complete genome sequence of Clostridium perfringens, an anaerobic flesh-eater.</title>
        <authorList>
            <person name="Shimizu T."/>
            <person name="Ohtani K."/>
            <person name="Hirakawa H."/>
            <person name="Ohshima K."/>
            <person name="Yamashita A."/>
            <person name="Shiba T."/>
            <person name="Ogasawara N."/>
            <person name="Hattori M."/>
            <person name="Kuhara S."/>
            <person name="Hayashi H."/>
        </authorList>
    </citation>
    <scope>NUCLEOTIDE SEQUENCE [LARGE SCALE GENOMIC DNA]</scope>
    <source>
        <strain>13 / Type A</strain>
    </source>
</reference>